<dbReference type="EC" id="1.1.1.290" evidence="1"/>
<dbReference type="EMBL" id="CP001164">
    <property type="protein sequence ID" value="ACI34617.1"/>
    <property type="molecule type" value="Genomic_DNA"/>
</dbReference>
<dbReference type="RefSeq" id="WP_000699109.1">
    <property type="nucleotide sequence ID" value="NC_011353.1"/>
</dbReference>
<dbReference type="SMR" id="B5YXW1"/>
<dbReference type="KEGG" id="ecf:ECH74115_3460"/>
<dbReference type="HOGENOM" id="CLU_019796_4_0_6"/>
<dbReference type="UniPathway" id="UPA00244">
    <property type="reaction ID" value="UER00310"/>
</dbReference>
<dbReference type="GO" id="GO:0005829">
    <property type="term" value="C:cytosol"/>
    <property type="evidence" value="ECO:0007669"/>
    <property type="project" value="TreeGrafter"/>
</dbReference>
<dbReference type="GO" id="GO:0033711">
    <property type="term" value="F:4-phosphoerythronate dehydrogenase activity"/>
    <property type="evidence" value="ECO:0007669"/>
    <property type="project" value="UniProtKB-EC"/>
</dbReference>
<dbReference type="GO" id="GO:0051287">
    <property type="term" value="F:NAD binding"/>
    <property type="evidence" value="ECO:0007669"/>
    <property type="project" value="InterPro"/>
</dbReference>
<dbReference type="GO" id="GO:0046983">
    <property type="term" value="F:protein dimerization activity"/>
    <property type="evidence" value="ECO:0007669"/>
    <property type="project" value="InterPro"/>
</dbReference>
<dbReference type="GO" id="GO:0036001">
    <property type="term" value="P:'de novo' pyridoxal 5'-phosphate biosynthetic process"/>
    <property type="evidence" value="ECO:0007669"/>
    <property type="project" value="TreeGrafter"/>
</dbReference>
<dbReference type="GO" id="GO:0008615">
    <property type="term" value="P:pyridoxine biosynthetic process"/>
    <property type="evidence" value="ECO:0007669"/>
    <property type="project" value="UniProtKB-UniRule"/>
</dbReference>
<dbReference type="CDD" id="cd12158">
    <property type="entry name" value="ErythrP_dh"/>
    <property type="match status" value="1"/>
</dbReference>
<dbReference type="FunFam" id="3.30.1370.170:FF:000001">
    <property type="entry name" value="Erythronate-4-phosphate dehydrogenase"/>
    <property type="match status" value="1"/>
</dbReference>
<dbReference type="FunFam" id="3.40.50.720:FF:000093">
    <property type="entry name" value="Erythronate-4-phosphate dehydrogenase"/>
    <property type="match status" value="1"/>
</dbReference>
<dbReference type="Gene3D" id="3.30.1370.170">
    <property type="match status" value="1"/>
</dbReference>
<dbReference type="Gene3D" id="3.40.50.720">
    <property type="entry name" value="NAD(P)-binding Rossmann-like Domain"/>
    <property type="match status" value="2"/>
</dbReference>
<dbReference type="HAMAP" id="MF_01825">
    <property type="entry name" value="PdxB"/>
    <property type="match status" value="1"/>
</dbReference>
<dbReference type="InterPro" id="IPR006139">
    <property type="entry name" value="D-isomer_2_OHA_DH_cat_dom"/>
</dbReference>
<dbReference type="InterPro" id="IPR029753">
    <property type="entry name" value="D-isomer_DH_CS"/>
</dbReference>
<dbReference type="InterPro" id="IPR029752">
    <property type="entry name" value="D-isomer_DH_CS1"/>
</dbReference>
<dbReference type="InterPro" id="IPR006140">
    <property type="entry name" value="D-isomer_DH_NAD-bd"/>
</dbReference>
<dbReference type="InterPro" id="IPR020921">
    <property type="entry name" value="Erythronate-4-P_DHase"/>
</dbReference>
<dbReference type="InterPro" id="IPR024531">
    <property type="entry name" value="Erythronate-4-P_DHase_dimer"/>
</dbReference>
<dbReference type="InterPro" id="IPR036291">
    <property type="entry name" value="NAD(P)-bd_dom_sf"/>
</dbReference>
<dbReference type="InterPro" id="IPR038251">
    <property type="entry name" value="PdxB_dimer_sf"/>
</dbReference>
<dbReference type="NCBIfam" id="NF001309">
    <property type="entry name" value="PRK00257.1"/>
    <property type="match status" value="1"/>
</dbReference>
<dbReference type="NCBIfam" id="NF011966">
    <property type="entry name" value="PRK15438.1"/>
    <property type="match status" value="1"/>
</dbReference>
<dbReference type="PANTHER" id="PTHR42938">
    <property type="entry name" value="FORMATE DEHYDROGENASE 1"/>
    <property type="match status" value="1"/>
</dbReference>
<dbReference type="PANTHER" id="PTHR42938:SF9">
    <property type="entry name" value="FORMATE DEHYDROGENASE 1"/>
    <property type="match status" value="1"/>
</dbReference>
<dbReference type="Pfam" id="PF00389">
    <property type="entry name" value="2-Hacid_dh"/>
    <property type="match status" value="1"/>
</dbReference>
<dbReference type="Pfam" id="PF02826">
    <property type="entry name" value="2-Hacid_dh_C"/>
    <property type="match status" value="1"/>
</dbReference>
<dbReference type="Pfam" id="PF11890">
    <property type="entry name" value="DUF3410"/>
    <property type="match status" value="1"/>
</dbReference>
<dbReference type="SUPFAM" id="SSF52283">
    <property type="entry name" value="Formate/glycerate dehydrogenase catalytic domain-like"/>
    <property type="match status" value="1"/>
</dbReference>
<dbReference type="SUPFAM" id="SSF51735">
    <property type="entry name" value="NAD(P)-binding Rossmann-fold domains"/>
    <property type="match status" value="1"/>
</dbReference>
<dbReference type="PROSITE" id="PS00065">
    <property type="entry name" value="D_2_HYDROXYACID_DH_1"/>
    <property type="match status" value="1"/>
</dbReference>
<dbReference type="PROSITE" id="PS00671">
    <property type="entry name" value="D_2_HYDROXYACID_DH_3"/>
    <property type="match status" value="1"/>
</dbReference>
<feature type="chain" id="PRO_1000188261" description="Erythronate-4-phosphate dehydrogenase">
    <location>
        <begin position="1"/>
        <end position="378"/>
    </location>
</feature>
<feature type="active site" evidence="1">
    <location>
        <position position="208"/>
    </location>
</feature>
<feature type="active site" evidence="1">
    <location>
        <position position="237"/>
    </location>
</feature>
<feature type="active site" description="Proton donor" evidence="1">
    <location>
        <position position="254"/>
    </location>
</feature>
<feature type="binding site" evidence="1">
    <location>
        <position position="45"/>
    </location>
    <ligand>
        <name>substrate</name>
    </ligand>
</feature>
<feature type="binding site" evidence="1">
    <location>
        <position position="66"/>
    </location>
    <ligand>
        <name>substrate</name>
    </ligand>
</feature>
<feature type="binding site" evidence="1">
    <location>
        <position position="146"/>
    </location>
    <ligand>
        <name>NAD(+)</name>
        <dbReference type="ChEBI" id="CHEBI:57540"/>
    </ligand>
</feature>
<feature type="binding site" evidence="1">
    <location>
        <position position="175"/>
    </location>
    <ligand>
        <name>NAD(+)</name>
        <dbReference type="ChEBI" id="CHEBI:57540"/>
    </ligand>
</feature>
<feature type="binding site" evidence="1">
    <location>
        <position position="232"/>
    </location>
    <ligand>
        <name>NAD(+)</name>
        <dbReference type="ChEBI" id="CHEBI:57540"/>
    </ligand>
</feature>
<feature type="binding site" evidence="1">
    <location>
        <position position="257"/>
    </location>
    <ligand>
        <name>NAD(+)</name>
        <dbReference type="ChEBI" id="CHEBI:57540"/>
    </ligand>
</feature>
<feature type="binding site" evidence="1">
    <location>
        <position position="258"/>
    </location>
    <ligand>
        <name>substrate</name>
    </ligand>
</feature>
<protein>
    <recommendedName>
        <fullName evidence="1">Erythronate-4-phosphate dehydrogenase</fullName>
        <ecNumber evidence="1">1.1.1.290</ecNumber>
    </recommendedName>
</protein>
<accession>B5YXW1</accession>
<comment type="function">
    <text evidence="1">Catalyzes the oxidation of erythronate-4-phosphate to 3-hydroxy-2-oxo-4-phosphonooxybutanoate.</text>
</comment>
<comment type="catalytic activity">
    <reaction evidence="1">
        <text>4-phospho-D-erythronate + NAD(+) = (R)-3-hydroxy-2-oxo-4-phosphooxybutanoate + NADH + H(+)</text>
        <dbReference type="Rhea" id="RHEA:18829"/>
        <dbReference type="ChEBI" id="CHEBI:15378"/>
        <dbReference type="ChEBI" id="CHEBI:57540"/>
        <dbReference type="ChEBI" id="CHEBI:57945"/>
        <dbReference type="ChEBI" id="CHEBI:58538"/>
        <dbReference type="ChEBI" id="CHEBI:58766"/>
        <dbReference type="EC" id="1.1.1.290"/>
    </reaction>
</comment>
<comment type="pathway">
    <text evidence="1">Cofactor biosynthesis; pyridoxine 5'-phosphate biosynthesis; pyridoxine 5'-phosphate from D-erythrose 4-phosphate: step 2/5.</text>
</comment>
<comment type="subunit">
    <text evidence="1">Homodimer.</text>
</comment>
<comment type="subcellular location">
    <subcellularLocation>
        <location evidence="1">Cytoplasm</location>
    </subcellularLocation>
</comment>
<comment type="similarity">
    <text evidence="1">Belongs to the D-isomer specific 2-hydroxyacid dehydrogenase family. PdxB subfamily.</text>
</comment>
<evidence type="ECO:0000255" key="1">
    <source>
        <dbReference type="HAMAP-Rule" id="MF_01825"/>
    </source>
</evidence>
<keyword id="KW-0963">Cytoplasm</keyword>
<keyword id="KW-0520">NAD</keyword>
<keyword id="KW-0560">Oxidoreductase</keyword>
<keyword id="KW-0664">Pyridoxine biosynthesis</keyword>
<sequence>MKILVDENMPYARDLFSRLGEVIAVPGRPIPVAQLADADALMVRSVTKVNESLLAGKPIKFVGTATAGTDHVDEAWLKQAGIGFSAAPGCNAIAVVEYVFSSLLMLAERDGFSLHERTVGIVGVGNVGRRLQARLEALGIKTLLCDPPRADCGDEGDFRSLDELVQRADILTFHTPLFKDGPYKTLHLADEKLIRSLKPGAILINACRGAVVDNTALLTCLNEGQKLSVVLDVWEGEPELNVELLTKVDIGTPHIAGYTLEGKARGTTQVFEAYSKFIGHEQHVALDTLLPAPEFGRITLHGPLDQPTLKRLVHLVYDVRRDDAPLRKVAGIPGEFDKLRKNYLERREWSSLYVICDDASAASLLCKLGFNAVHHPAR</sequence>
<reference key="1">
    <citation type="journal article" date="2011" name="Proc. Natl. Acad. Sci. U.S.A.">
        <title>Genomic anatomy of Escherichia coli O157:H7 outbreaks.</title>
        <authorList>
            <person name="Eppinger M."/>
            <person name="Mammel M.K."/>
            <person name="Leclerc J.E."/>
            <person name="Ravel J."/>
            <person name="Cebula T.A."/>
        </authorList>
    </citation>
    <scope>NUCLEOTIDE SEQUENCE [LARGE SCALE GENOMIC DNA]</scope>
    <source>
        <strain>EC4115 / EHEC</strain>
    </source>
</reference>
<proteinExistence type="inferred from homology"/>
<organism>
    <name type="scientific">Escherichia coli O157:H7 (strain EC4115 / EHEC)</name>
    <dbReference type="NCBI Taxonomy" id="444450"/>
    <lineage>
        <taxon>Bacteria</taxon>
        <taxon>Pseudomonadati</taxon>
        <taxon>Pseudomonadota</taxon>
        <taxon>Gammaproteobacteria</taxon>
        <taxon>Enterobacterales</taxon>
        <taxon>Enterobacteriaceae</taxon>
        <taxon>Escherichia</taxon>
    </lineage>
</organism>
<name>PDXB_ECO5E</name>
<gene>
    <name evidence="1" type="primary">pdxB</name>
    <name type="ordered locus">ECH74115_3460</name>
</gene>